<reference key="1">
    <citation type="journal article" date="2000" name="Nature">
        <title>Sequence and analysis of chromosome 5 of the plant Arabidopsis thaliana.</title>
        <authorList>
            <person name="Tabata S."/>
            <person name="Kaneko T."/>
            <person name="Nakamura Y."/>
            <person name="Kotani H."/>
            <person name="Kato T."/>
            <person name="Asamizu E."/>
            <person name="Miyajima N."/>
            <person name="Sasamoto S."/>
            <person name="Kimura T."/>
            <person name="Hosouchi T."/>
            <person name="Kawashima K."/>
            <person name="Kohara M."/>
            <person name="Matsumoto M."/>
            <person name="Matsuno A."/>
            <person name="Muraki A."/>
            <person name="Nakayama S."/>
            <person name="Nakazaki N."/>
            <person name="Naruo K."/>
            <person name="Okumura S."/>
            <person name="Shinpo S."/>
            <person name="Takeuchi C."/>
            <person name="Wada T."/>
            <person name="Watanabe A."/>
            <person name="Yamada M."/>
            <person name="Yasuda M."/>
            <person name="Sato S."/>
            <person name="de la Bastide M."/>
            <person name="Huang E."/>
            <person name="Spiegel L."/>
            <person name="Gnoj L."/>
            <person name="O'Shaughnessy A."/>
            <person name="Preston R."/>
            <person name="Habermann K."/>
            <person name="Murray J."/>
            <person name="Johnson D."/>
            <person name="Rohlfing T."/>
            <person name="Nelson J."/>
            <person name="Stoneking T."/>
            <person name="Pepin K."/>
            <person name="Spieth J."/>
            <person name="Sekhon M."/>
            <person name="Armstrong J."/>
            <person name="Becker M."/>
            <person name="Belter E."/>
            <person name="Cordum H."/>
            <person name="Cordes M."/>
            <person name="Courtney L."/>
            <person name="Courtney W."/>
            <person name="Dante M."/>
            <person name="Du H."/>
            <person name="Edwards J."/>
            <person name="Fryman J."/>
            <person name="Haakensen B."/>
            <person name="Lamar E."/>
            <person name="Latreille P."/>
            <person name="Leonard S."/>
            <person name="Meyer R."/>
            <person name="Mulvaney E."/>
            <person name="Ozersky P."/>
            <person name="Riley A."/>
            <person name="Strowmatt C."/>
            <person name="Wagner-McPherson C."/>
            <person name="Wollam A."/>
            <person name="Yoakum M."/>
            <person name="Bell M."/>
            <person name="Dedhia N."/>
            <person name="Parnell L."/>
            <person name="Shah R."/>
            <person name="Rodriguez M."/>
            <person name="Hoon See L."/>
            <person name="Vil D."/>
            <person name="Baker J."/>
            <person name="Kirchoff K."/>
            <person name="Toth K."/>
            <person name="King L."/>
            <person name="Bahret A."/>
            <person name="Miller B."/>
            <person name="Marra M.A."/>
            <person name="Martienssen R."/>
            <person name="McCombie W.R."/>
            <person name="Wilson R.K."/>
            <person name="Murphy G."/>
            <person name="Bancroft I."/>
            <person name="Volckaert G."/>
            <person name="Wambutt R."/>
            <person name="Duesterhoeft A."/>
            <person name="Stiekema W."/>
            <person name="Pohl T."/>
            <person name="Entian K.-D."/>
            <person name="Terryn N."/>
            <person name="Hartley N."/>
            <person name="Bent E."/>
            <person name="Johnson S."/>
            <person name="Langham S.-A."/>
            <person name="McCullagh B."/>
            <person name="Robben J."/>
            <person name="Grymonprez B."/>
            <person name="Zimmermann W."/>
            <person name="Ramsperger U."/>
            <person name="Wedler H."/>
            <person name="Balke K."/>
            <person name="Wedler E."/>
            <person name="Peters S."/>
            <person name="van Staveren M."/>
            <person name="Dirkse W."/>
            <person name="Mooijman P."/>
            <person name="Klein Lankhorst R."/>
            <person name="Weitzenegger T."/>
            <person name="Bothe G."/>
            <person name="Rose M."/>
            <person name="Hauf J."/>
            <person name="Berneiser S."/>
            <person name="Hempel S."/>
            <person name="Feldpausch M."/>
            <person name="Lamberth S."/>
            <person name="Villarroel R."/>
            <person name="Gielen J."/>
            <person name="Ardiles W."/>
            <person name="Bents O."/>
            <person name="Lemcke K."/>
            <person name="Kolesov G."/>
            <person name="Mayer K.F.X."/>
            <person name="Rudd S."/>
            <person name="Schoof H."/>
            <person name="Schueller C."/>
            <person name="Zaccaria P."/>
            <person name="Mewes H.-W."/>
            <person name="Bevan M."/>
            <person name="Fransz P.F."/>
        </authorList>
    </citation>
    <scope>NUCLEOTIDE SEQUENCE [LARGE SCALE GENOMIC DNA]</scope>
    <source>
        <strain>cv. Columbia</strain>
    </source>
</reference>
<reference key="2">
    <citation type="journal article" date="2017" name="Plant J.">
        <title>Araport11: a complete reannotation of the Arabidopsis thaliana reference genome.</title>
        <authorList>
            <person name="Cheng C.Y."/>
            <person name="Krishnakumar V."/>
            <person name="Chan A.P."/>
            <person name="Thibaud-Nissen F."/>
            <person name="Schobel S."/>
            <person name="Town C.D."/>
        </authorList>
    </citation>
    <scope>GENOME REANNOTATION</scope>
    <source>
        <strain>cv. Columbia</strain>
    </source>
</reference>
<reference key="3">
    <citation type="journal article" date="2003" name="Science">
        <title>Empirical analysis of transcriptional activity in the Arabidopsis genome.</title>
        <authorList>
            <person name="Yamada K."/>
            <person name="Lim J."/>
            <person name="Dale J.M."/>
            <person name="Chen H."/>
            <person name="Shinn P."/>
            <person name="Palm C.J."/>
            <person name="Southwick A.M."/>
            <person name="Wu H.C."/>
            <person name="Kim C.J."/>
            <person name="Nguyen M."/>
            <person name="Pham P.K."/>
            <person name="Cheuk R.F."/>
            <person name="Karlin-Newmann G."/>
            <person name="Liu S.X."/>
            <person name="Lam B."/>
            <person name="Sakano H."/>
            <person name="Wu T."/>
            <person name="Yu G."/>
            <person name="Miranda M."/>
            <person name="Quach H.L."/>
            <person name="Tripp M."/>
            <person name="Chang C.H."/>
            <person name="Lee J.M."/>
            <person name="Toriumi M.J."/>
            <person name="Chan M.M."/>
            <person name="Tang C.C."/>
            <person name="Onodera C.S."/>
            <person name="Deng J.M."/>
            <person name="Akiyama K."/>
            <person name="Ansari Y."/>
            <person name="Arakawa T."/>
            <person name="Banh J."/>
            <person name="Banno F."/>
            <person name="Bowser L."/>
            <person name="Brooks S.Y."/>
            <person name="Carninci P."/>
            <person name="Chao Q."/>
            <person name="Choy N."/>
            <person name="Enju A."/>
            <person name="Goldsmith A.D."/>
            <person name="Gurjal M."/>
            <person name="Hansen N.F."/>
            <person name="Hayashizaki Y."/>
            <person name="Johnson-Hopson C."/>
            <person name="Hsuan V.W."/>
            <person name="Iida K."/>
            <person name="Karnes M."/>
            <person name="Khan S."/>
            <person name="Koesema E."/>
            <person name="Ishida J."/>
            <person name="Jiang P.X."/>
            <person name="Jones T."/>
            <person name="Kawai J."/>
            <person name="Kamiya A."/>
            <person name="Meyers C."/>
            <person name="Nakajima M."/>
            <person name="Narusaka M."/>
            <person name="Seki M."/>
            <person name="Sakurai T."/>
            <person name="Satou M."/>
            <person name="Tamse R."/>
            <person name="Vaysberg M."/>
            <person name="Wallender E.K."/>
            <person name="Wong C."/>
            <person name="Yamamura Y."/>
            <person name="Yuan S."/>
            <person name="Shinozaki K."/>
            <person name="Davis R.W."/>
            <person name="Theologis A."/>
            <person name="Ecker J.R."/>
        </authorList>
    </citation>
    <scope>NUCLEOTIDE SEQUENCE [LARGE SCALE MRNA]</scope>
    <source>
        <strain>cv. Columbia</strain>
    </source>
</reference>
<reference key="4">
    <citation type="journal article" date="2019" name="Mol. Plant">
        <title>Two Arabidopsis receptor-like cytoplasmic kinases SZE1 and SZE2 associate with the ZAR1-ZED1 complex and are required for effector-triggered immunity.</title>
        <authorList>
            <person name="Liu C."/>
            <person name="Cui D."/>
            <person name="Zhao J."/>
            <person name="Liu N."/>
            <person name="Wang B."/>
            <person name="Liu J."/>
            <person name="Xu E."/>
            <person name="Hu Z."/>
            <person name="Ren D."/>
            <person name="Tang D."/>
            <person name="Hu Y."/>
        </authorList>
    </citation>
    <scope>FUNCTION</scope>
    <scope>MUTAGENESIS OF GLY-2; LYS-71 AND GLY-221</scope>
    <scope>DISRUPTION PHENOTYPE</scope>
    <scope>SUBUNIT</scope>
    <scope>AUTOPHOSPHORYLATION</scope>
    <scope>CATALYTIC ACTIVITY</scope>
    <scope>SUBCELLULAR LOCATION</scope>
    <scope>MYRISTOYLATION AT GLY-2</scope>
    <scope>INTERACTION WITH ZED1; ZAR1 AND PSEUDOMONAS SYRINGAE HOPZ1A</scope>
    <scope>TISSUE SPECIFICITY</scope>
    <source>
        <strain>cv. Columbia</strain>
        <strain>cv. Landsberg erecta</strain>
    </source>
</reference>
<accession>Q8L617</accession>
<evidence type="ECO:0000255" key="1">
    <source>
        <dbReference type="PROSITE-ProRule" id="PRU00159"/>
    </source>
</evidence>
<evidence type="ECO:0000269" key="2">
    <source>
    </source>
</evidence>
<evidence type="ECO:0000303" key="3">
    <source>
    </source>
</evidence>
<evidence type="ECO:0000305" key="4"/>
<evidence type="ECO:0000312" key="5">
    <source>
        <dbReference type="Araport" id="AT5G25440"/>
    </source>
</evidence>
<evidence type="ECO:0000312" key="6">
    <source>
        <dbReference type="EMBL" id="AC006258"/>
    </source>
</evidence>
<dbReference type="EC" id="2.7.11.1" evidence="2"/>
<dbReference type="EMBL" id="AC006258">
    <property type="status" value="NOT_ANNOTATED_CDS"/>
    <property type="molecule type" value="Genomic_DNA"/>
</dbReference>
<dbReference type="EMBL" id="CP002688">
    <property type="protein sequence ID" value="AED93443.1"/>
    <property type="molecule type" value="Genomic_DNA"/>
</dbReference>
<dbReference type="EMBL" id="AY099651">
    <property type="protein sequence ID" value="AAM20502.1"/>
    <property type="molecule type" value="mRNA"/>
</dbReference>
<dbReference type="EMBL" id="BT000247">
    <property type="protein sequence ID" value="AAN15566.1"/>
    <property type="molecule type" value="mRNA"/>
</dbReference>
<dbReference type="RefSeq" id="NP_197926.2">
    <property type="nucleotide sequence ID" value="NM_122454.6"/>
</dbReference>
<dbReference type="SMR" id="Q8L617"/>
<dbReference type="FunCoup" id="Q8L617">
    <property type="interactions" value="4"/>
</dbReference>
<dbReference type="IntAct" id="Q8L617">
    <property type="interactions" value="2"/>
</dbReference>
<dbReference type="iPTMnet" id="Q8L617"/>
<dbReference type="PaxDb" id="3702-AT5G25440.1"/>
<dbReference type="ProteomicsDB" id="191940"/>
<dbReference type="EnsemblPlants" id="AT5G25440.1">
    <property type="protein sequence ID" value="AT5G25440.1"/>
    <property type="gene ID" value="AT5G25440"/>
</dbReference>
<dbReference type="GeneID" id="832618"/>
<dbReference type="Gramene" id="AT5G25440.1">
    <property type="protein sequence ID" value="AT5G25440.1"/>
    <property type="gene ID" value="AT5G25440"/>
</dbReference>
<dbReference type="KEGG" id="ath:AT5G25440"/>
<dbReference type="Araport" id="AT5G25440"/>
<dbReference type="TAIR" id="AT5G25440">
    <property type="gene designation" value="SZE1"/>
</dbReference>
<dbReference type="eggNOG" id="KOG1187">
    <property type="taxonomic scope" value="Eukaryota"/>
</dbReference>
<dbReference type="HOGENOM" id="CLU_000288_21_1_1"/>
<dbReference type="OMA" id="ERSTYHM"/>
<dbReference type="PRO" id="PR:Q8L617"/>
<dbReference type="Proteomes" id="UP000006548">
    <property type="component" value="Chromosome 5"/>
</dbReference>
<dbReference type="ExpressionAtlas" id="Q8L617">
    <property type="expression patterns" value="baseline and differential"/>
</dbReference>
<dbReference type="GO" id="GO:0005737">
    <property type="term" value="C:cytoplasm"/>
    <property type="evidence" value="ECO:0007005"/>
    <property type="project" value="TAIR"/>
</dbReference>
<dbReference type="GO" id="GO:0005634">
    <property type="term" value="C:nucleus"/>
    <property type="evidence" value="ECO:0007005"/>
    <property type="project" value="TAIR"/>
</dbReference>
<dbReference type="GO" id="GO:0005886">
    <property type="term" value="C:plasma membrane"/>
    <property type="evidence" value="ECO:0000314"/>
    <property type="project" value="TAIR"/>
</dbReference>
<dbReference type="GO" id="GO:0009506">
    <property type="term" value="C:plasmodesma"/>
    <property type="evidence" value="ECO:0007005"/>
    <property type="project" value="TAIR"/>
</dbReference>
<dbReference type="GO" id="GO:0005524">
    <property type="term" value="F:ATP binding"/>
    <property type="evidence" value="ECO:0007669"/>
    <property type="project" value="UniProtKB-KW"/>
</dbReference>
<dbReference type="GO" id="GO:0004672">
    <property type="term" value="F:protein kinase activity"/>
    <property type="evidence" value="ECO:0000314"/>
    <property type="project" value="TAIR"/>
</dbReference>
<dbReference type="GO" id="GO:0006952">
    <property type="term" value="P:defense response"/>
    <property type="evidence" value="ECO:0007669"/>
    <property type="project" value="UniProtKB-KW"/>
</dbReference>
<dbReference type="GO" id="GO:0002757">
    <property type="term" value="P:immune response-activating signaling pathway"/>
    <property type="evidence" value="ECO:0000316"/>
    <property type="project" value="TAIR"/>
</dbReference>
<dbReference type="GO" id="GO:1900426">
    <property type="term" value="P:positive regulation of defense response to bacterium"/>
    <property type="evidence" value="ECO:0000316"/>
    <property type="project" value="TAIR"/>
</dbReference>
<dbReference type="GO" id="GO:0046777">
    <property type="term" value="P:protein autophosphorylation"/>
    <property type="evidence" value="ECO:0000314"/>
    <property type="project" value="TAIR"/>
</dbReference>
<dbReference type="FunFam" id="1.10.510.10:FF:001762">
    <property type="entry name" value="Protein kinase superfamily protein"/>
    <property type="match status" value="1"/>
</dbReference>
<dbReference type="FunFam" id="3.30.200.20:FF:001396">
    <property type="entry name" value="Protein kinase superfamily protein"/>
    <property type="match status" value="1"/>
</dbReference>
<dbReference type="Gene3D" id="3.30.200.20">
    <property type="entry name" value="Phosphorylase Kinase, domain 1"/>
    <property type="match status" value="1"/>
</dbReference>
<dbReference type="Gene3D" id="1.10.510.10">
    <property type="entry name" value="Transferase(Phosphotransferase) domain 1"/>
    <property type="match status" value="1"/>
</dbReference>
<dbReference type="InterPro" id="IPR011009">
    <property type="entry name" value="Kinase-like_dom_sf"/>
</dbReference>
<dbReference type="InterPro" id="IPR050823">
    <property type="entry name" value="Plant_Ser_Thr_Prot_Kinase"/>
</dbReference>
<dbReference type="InterPro" id="IPR000719">
    <property type="entry name" value="Prot_kinase_dom"/>
</dbReference>
<dbReference type="InterPro" id="IPR001245">
    <property type="entry name" value="Ser-Thr/Tyr_kinase_cat_dom"/>
</dbReference>
<dbReference type="PANTHER" id="PTHR45621">
    <property type="entry name" value="OS01G0588500 PROTEIN-RELATED"/>
    <property type="match status" value="1"/>
</dbReference>
<dbReference type="Pfam" id="PF07714">
    <property type="entry name" value="PK_Tyr_Ser-Thr"/>
    <property type="match status" value="1"/>
</dbReference>
<dbReference type="SUPFAM" id="SSF56112">
    <property type="entry name" value="Protein kinase-like (PK-like)"/>
    <property type="match status" value="1"/>
</dbReference>
<dbReference type="PROSITE" id="PS50011">
    <property type="entry name" value="PROTEIN_KINASE_DOM"/>
    <property type="match status" value="1"/>
</dbReference>
<sequence>MGNCLSASTLPTEPNAPKSVEEGVKVFTVADLKKATNDFGNQMELGESLGYINPKTLSPAKKGVGMAVAVKKIYLANEQAFQDWLVDVEFLRHNSHPSLVKLIGYCYDRDMLFIVSEYFPNGSLGSYISRDSRPKSLPWETRLKISIGAAQCLAFLHSRKQAGLYRRYLTASKILLDSDFNARVSYFGKPKVSLDELVYTIGFSNVAPRYQYPPPEYILSGMSNMAGDVYSFGVILLKMLTGLGKDLTISAKREIKNKKYNIVEMIDPDLKNSYPLEAGRLMCELIKQCLEVDPKMRPTMQEVLDNLNAIAQI</sequence>
<organism>
    <name type="scientific">Arabidopsis thaliana</name>
    <name type="common">Mouse-ear cress</name>
    <dbReference type="NCBI Taxonomy" id="3702"/>
    <lineage>
        <taxon>Eukaryota</taxon>
        <taxon>Viridiplantae</taxon>
        <taxon>Streptophyta</taxon>
        <taxon>Embryophyta</taxon>
        <taxon>Tracheophyta</taxon>
        <taxon>Spermatophyta</taxon>
        <taxon>Magnoliopsida</taxon>
        <taxon>eudicotyledons</taxon>
        <taxon>Gunneridae</taxon>
        <taxon>Pentapetalae</taxon>
        <taxon>rosids</taxon>
        <taxon>malvids</taxon>
        <taxon>Brassicales</taxon>
        <taxon>Brassicaceae</taxon>
        <taxon>Camelineae</taxon>
        <taxon>Arabidopsis</taxon>
    </lineage>
</organism>
<feature type="initiator methionine" description="Removed" evidence="2">
    <location>
        <position position="1"/>
    </location>
</feature>
<feature type="chain" id="PRO_0000457801" description="Serine/threonine-protein kinase SZE1">
    <location>
        <begin position="2"/>
        <end position="313"/>
    </location>
</feature>
<feature type="domain" description="Protein kinase" evidence="1">
    <location>
        <begin position="43"/>
        <end position="311"/>
    </location>
</feature>
<feature type="binding site" evidence="1">
    <location>
        <begin position="49"/>
        <end position="57"/>
    </location>
    <ligand>
        <name>ATP</name>
        <dbReference type="ChEBI" id="CHEBI:30616"/>
    </ligand>
</feature>
<feature type="binding site" evidence="1">
    <location>
        <position position="71"/>
    </location>
    <ligand>
        <name>ATP</name>
        <dbReference type="ChEBI" id="CHEBI:30616"/>
    </ligand>
</feature>
<feature type="lipid moiety-binding region" description="N-myristoyl glycine" evidence="2">
    <location>
        <position position="2"/>
    </location>
</feature>
<feature type="mutagenesis site" description="Abolished N-terminal myristoylation leading to disrupted plasma membrane localization and inhability to suppress zed1-D-activated immunity. Lost ability to trigger hypersensitive response (HR)." evidence="2">
    <original>G</original>
    <variation>A</variation>
    <location>
        <position position="2"/>
    </location>
</feature>
<feature type="mutagenesis site" description="Abolished autophosphorylation activity. Reduced ability to trigger hypersensitive response (HR)." evidence="2">
    <original>K</original>
    <variation>E</variation>
    <location>
        <position position="71"/>
    </location>
</feature>
<feature type="mutagenesis site" description="Lost ability to trigger hypersensitive response (HR)." evidence="2">
    <original>G</original>
    <variation>E</variation>
    <location>
        <position position="221"/>
    </location>
</feature>
<protein>
    <recommendedName>
        <fullName evidence="4">Serine/threonine-protein kinase SZE1</fullName>
        <ecNumber evidence="2">2.7.11.1</ecNumber>
    </recommendedName>
    <alternativeName>
        <fullName evidence="3">Protein SUPPRESSOR OF ZED1-D1</fullName>
    </alternativeName>
    <alternativeName>
        <fullName evidence="3">Receptor-like cytoplasmic kinase SZE1</fullName>
    </alternativeName>
</protein>
<comment type="function">
    <text evidence="2">Together with BKN2/SZE2 and ZED1, required for effector-triggered immunity (e.g. Pseudomonas syringae effector type III HopZ1a) via the activation of ZAR1, thus being essential for resistance against P.syringae pv. tomato DC3000 expressing HopZ1a.</text>
</comment>
<comment type="catalytic activity">
    <reaction evidence="2">
        <text>L-seryl-[protein] + ATP = O-phospho-L-seryl-[protein] + ADP + H(+)</text>
        <dbReference type="Rhea" id="RHEA:17989"/>
        <dbReference type="Rhea" id="RHEA-COMP:9863"/>
        <dbReference type="Rhea" id="RHEA-COMP:11604"/>
        <dbReference type="ChEBI" id="CHEBI:15378"/>
        <dbReference type="ChEBI" id="CHEBI:29999"/>
        <dbReference type="ChEBI" id="CHEBI:30616"/>
        <dbReference type="ChEBI" id="CHEBI:83421"/>
        <dbReference type="ChEBI" id="CHEBI:456216"/>
        <dbReference type="EC" id="2.7.11.1"/>
    </reaction>
</comment>
<comment type="catalytic activity">
    <reaction evidence="2">
        <text>L-threonyl-[protein] + ATP = O-phospho-L-threonyl-[protein] + ADP + H(+)</text>
        <dbReference type="Rhea" id="RHEA:46608"/>
        <dbReference type="Rhea" id="RHEA-COMP:11060"/>
        <dbReference type="Rhea" id="RHEA-COMP:11605"/>
        <dbReference type="ChEBI" id="CHEBI:15378"/>
        <dbReference type="ChEBI" id="CHEBI:30013"/>
        <dbReference type="ChEBI" id="CHEBI:30616"/>
        <dbReference type="ChEBI" id="CHEBI:61977"/>
        <dbReference type="ChEBI" id="CHEBI:456216"/>
        <dbReference type="EC" id="2.7.11.1"/>
    </reaction>
</comment>
<comment type="subunit">
    <text evidence="2">Component of an immune signaling complex made of, at least, SZE1, BKN2/SZE2, ZAR1 and ZED1 (PubMed:30947022). Interacts directly with ZED1, ZAR1 and Pseudomonas syringae HOPZ1A at the plasma membrane (PubMed:30947022).</text>
</comment>
<comment type="subcellular location">
    <subcellularLocation>
        <location evidence="2">Cell membrane</location>
        <topology evidence="2">Lipid-anchor</topology>
        <orientation evidence="2">Cytoplasmic side</orientation>
    </subcellularLocation>
</comment>
<comment type="tissue specificity">
    <text evidence="2">Expressed in roots, seedlings, rosette leaves, floral organs, siliques and inflorescence stems.</text>
</comment>
<comment type="PTM">
    <text evidence="2">N-terminal myristoylation is critical for plasma membrane localization and implication in defense responses.</text>
</comment>
<comment type="PTM">
    <text evidence="2">Autophosphorylated.</text>
</comment>
<comment type="disruption phenotype">
    <text evidence="2">Partial suppression of the pleiotropic phenotypes conferred by the dominant mutation zed1-D (e.g. high-temperature-dependent growth retardation and autoimmunity).</text>
</comment>
<comment type="similarity">
    <text evidence="4">Belongs to the protein kinase superfamily. Ser/Thr protein kinase family.</text>
</comment>
<proteinExistence type="evidence at protein level"/>
<keyword id="KW-0067">ATP-binding</keyword>
<keyword id="KW-1003">Cell membrane</keyword>
<keyword id="KW-0418">Kinase</keyword>
<keyword id="KW-0449">Lipoprotein</keyword>
<keyword id="KW-0472">Membrane</keyword>
<keyword id="KW-0519">Myristate</keyword>
<keyword id="KW-0547">Nucleotide-binding</keyword>
<keyword id="KW-0597">Phosphoprotein</keyword>
<keyword id="KW-0611">Plant defense</keyword>
<keyword id="KW-1185">Reference proteome</keyword>
<keyword id="KW-0808">Transferase</keyword>
<gene>
    <name evidence="3" type="primary">SZE1</name>
    <name evidence="5" type="ordered locus">At5g25440</name>
    <name evidence="6" type="ORF">F18G18.180</name>
</gene>
<name>SZE1_ARATH</name>